<protein>
    <recommendedName>
        <fullName>BPTI/Kunitz domain-containing protein 3</fullName>
    </recommendedName>
    <alternativeName>
        <fullName>Nacre serine protease inhibitor 2</fullName>
        <shortName>NSPI2</shortName>
    </alternativeName>
</protein>
<accession>P86964</accession>
<reference evidence="5" key="1">
    <citation type="journal article" date="2010" name="Mol. Biol. Evol.">
        <title>Parallel evolution of nacre building gene sets in molluscs.</title>
        <authorList>
            <person name="Jackson D.J."/>
            <person name="McDougall C."/>
            <person name="Woodcroft B."/>
            <person name="Moase P."/>
            <person name="Rose R.A."/>
            <person name="Kube M."/>
            <person name="Reinhardt R."/>
            <person name="Rokhsar D.S."/>
            <person name="Montagnani C."/>
            <person name="Joubert C."/>
            <person name="Piquemal D."/>
            <person name="Degnan B.M."/>
        </authorList>
    </citation>
    <scope>NUCLEOTIDE SEQUENCE [MRNA]</scope>
    <scope>IDENTIFICATION</scope>
    <source>
        <tissue evidence="3">Mantle</tissue>
    </source>
</reference>
<reference key="2">
    <citation type="journal article" date="2012" name="Proc. Natl. Acad. Sci. U.S.A.">
        <title>Different secretory repertoires control the biomineralization processes of prism and nacre deposition of the pearl oyster shell.</title>
        <authorList>
            <person name="Marie B."/>
            <person name="Joubert C."/>
            <person name="Tayale A."/>
            <person name="Zanella-Cleon I."/>
            <person name="Belliard C."/>
            <person name="Piquemal D."/>
            <person name="Cochennec-Laureau N."/>
            <person name="Marin F."/>
            <person name="Gueguen Y."/>
            <person name="Montagnani C."/>
        </authorList>
    </citation>
    <scope>PROTEIN SEQUENCE OF 117-124</scope>
    <scope>SUBCELLULAR LOCATION</scope>
    <scope>TISSUE SPECIFICITY</scope>
    <source>
        <tissue>Shell</tissue>
    </source>
</reference>
<evidence type="ECO:0000255" key="1"/>
<evidence type="ECO:0000255" key="2">
    <source>
        <dbReference type="PROSITE-ProRule" id="PRU00031"/>
    </source>
</evidence>
<evidence type="ECO:0000269" key="3">
    <source>
    </source>
</evidence>
<evidence type="ECO:0000269" key="4">
    <source>
    </source>
</evidence>
<evidence type="ECO:0000305" key="5"/>
<comment type="subcellular location">
    <subcellularLocation>
        <location evidence="4">Secreted</location>
    </subcellularLocation>
</comment>
<comment type="tissue specificity">
    <text evidence="4">Nacreous layer of shell (at protein level).</text>
</comment>
<comment type="sequence caution" evidence="5">
    <conflict type="frameshift">
        <sequence resource="EMBL" id="GT283012"/>
    </conflict>
</comment>
<feature type="signal peptide" evidence="1">
    <location>
        <begin position="1"/>
        <end position="16"/>
    </location>
</feature>
<feature type="chain" id="PRO_0000413077" description="BPTI/Kunitz domain-containing protein 3" evidence="1">
    <location>
        <begin position="17"/>
        <end position="157"/>
    </location>
</feature>
<feature type="domain" description="BPTI/Kunitz inhibitor 1" evidence="2">
    <location>
        <begin position="42"/>
        <end position="95"/>
    </location>
</feature>
<feature type="domain" description="BPTI/Kunitz inhibitor 2" evidence="2">
    <location>
        <begin position="97"/>
        <end position="151"/>
    </location>
</feature>
<feature type="disulfide bond" evidence="2">
    <location>
        <begin position="42"/>
        <end position="95"/>
    </location>
</feature>
<feature type="disulfide bond" evidence="2">
    <location>
        <begin position="70"/>
        <end position="91"/>
    </location>
</feature>
<feature type="disulfide bond" evidence="2">
    <location>
        <begin position="97"/>
        <end position="151"/>
    </location>
</feature>
<feature type="disulfide bond" evidence="2">
    <location>
        <begin position="107"/>
        <end position="134"/>
    </location>
</feature>
<feature type="disulfide bond" evidence="2">
    <location>
        <begin position="126"/>
        <end position="147"/>
    </location>
</feature>
<name>KCP3_PINMA</name>
<dbReference type="EMBL" id="GT278172">
    <property type="status" value="NOT_ANNOTATED_CDS"/>
    <property type="molecule type" value="mRNA"/>
</dbReference>
<dbReference type="EMBL" id="GT278177">
    <property type="status" value="NOT_ANNOTATED_CDS"/>
    <property type="molecule type" value="mRNA"/>
</dbReference>
<dbReference type="EMBL" id="GT278263">
    <property type="status" value="NOT_ANNOTATED_CDS"/>
    <property type="molecule type" value="mRNA"/>
</dbReference>
<dbReference type="EMBL" id="GT278547">
    <property type="status" value="NOT_ANNOTATED_CDS"/>
    <property type="molecule type" value="mRNA"/>
</dbReference>
<dbReference type="EMBL" id="GT280826">
    <property type="status" value="NOT_ANNOTATED_CDS"/>
    <property type="molecule type" value="mRNA"/>
</dbReference>
<dbReference type="EMBL" id="GT281554">
    <property type="status" value="NOT_ANNOTATED_CDS"/>
    <property type="molecule type" value="mRNA"/>
</dbReference>
<dbReference type="EMBL" id="GT281731">
    <property type="status" value="NOT_ANNOTATED_CDS"/>
    <property type="molecule type" value="mRNA"/>
</dbReference>
<dbReference type="EMBL" id="GT283012">
    <property type="status" value="NOT_ANNOTATED_CDS"/>
    <property type="molecule type" value="mRNA"/>
</dbReference>
<dbReference type="EMBL" id="GT283694">
    <property type="status" value="NOT_ANNOTATED_CDS"/>
    <property type="molecule type" value="mRNA"/>
</dbReference>
<dbReference type="EMBL" id="GT284261">
    <property type="status" value="NOT_ANNOTATED_CDS"/>
    <property type="molecule type" value="mRNA"/>
</dbReference>
<dbReference type="EMBL" id="EZ420214">
    <property type="status" value="NOT_ANNOTATED_CDS"/>
    <property type="molecule type" value="mRNA"/>
</dbReference>
<dbReference type="SMR" id="P86964"/>
<dbReference type="GO" id="GO:0005615">
    <property type="term" value="C:extracellular space"/>
    <property type="evidence" value="ECO:0007669"/>
    <property type="project" value="TreeGrafter"/>
</dbReference>
<dbReference type="GO" id="GO:0004867">
    <property type="term" value="F:serine-type endopeptidase inhibitor activity"/>
    <property type="evidence" value="ECO:0007669"/>
    <property type="project" value="UniProtKB-KW"/>
</dbReference>
<dbReference type="CDD" id="cd00109">
    <property type="entry name" value="Kunitz-type"/>
    <property type="match status" value="1"/>
</dbReference>
<dbReference type="Gene3D" id="4.10.410.10">
    <property type="entry name" value="Pancreatic trypsin inhibitor Kunitz domain"/>
    <property type="match status" value="2"/>
</dbReference>
<dbReference type="InterPro" id="IPR002223">
    <property type="entry name" value="Kunitz_BPTI"/>
</dbReference>
<dbReference type="InterPro" id="IPR036880">
    <property type="entry name" value="Kunitz_BPTI_sf"/>
</dbReference>
<dbReference type="InterPro" id="IPR020901">
    <property type="entry name" value="Prtase_inh_Kunz-CS"/>
</dbReference>
<dbReference type="InterPro" id="IPR050098">
    <property type="entry name" value="TFPI/VKTCI-like"/>
</dbReference>
<dbReference type="PANTHER" id="PTHR10083">
    <property type="entry name" value="KUNITZ-TYPE PROTEASE INHIBITOR-RELATED"/>
    <property type="match status" value="1"/>
</dbReference>
<dbReference type="PANTHER" id="PTHR10083:SF373">
    <property type="entry name" value="SERINE PEPTIDASE INHIBITOR, KUNITZ TYPE, 2"/>
    <property type="match status" value="1"/>
</dbReference>
<dbReference type="Pfam" id="PF00014">
    <property type="entry name" value="Kunitz_BPTI"/>
    <property type="match status" value="2"/>
</dbReference>
<dbReference type="SMART" id="SM00131">
    <property type="entry name" value="KU"/>
    <property type="match status" value="2"/>
</dbReference>
<dbReference type="SUPFAM" id="SSF57362">
    <property type="entry name" value="BPTI-like"/>
    <property type="match status" value="2"/>
</dbReference>
<dbReference type="PROSITE" id="PS00280">
    <property type="entry name" value="BPTI_KUNITZ_1"/>
    <property type="match status" value="1"/>
</dbReference>
<dbReference type="PROSITE" id="PS50279">
    <property type="entry name" value="BPTI_KUNITZ_2"/>
    <property type="match status" value="2"/>
</dbReference>
<sequence length="157" mass="17683">MIRLVTLAALPVLVLCQFDPSKWFMGSNLGGLQGFGVLPARCLNYLEAGYSRGNRLPSHRFFFNSTSGNCEQFVYYGRGGNRNNFRDVFKCMKSCGCKQQRNGGVPCNPPSQPVVRYYYDTFTKLCNTFQHTGCGGNSNHFKDWNDCFFTCGNGFET</sequence>
<proteinExistence type="evidence at protein level"/>
<keyword id="KW-0903">Direct protein sequencing</keyword>
<keyword id="KW-1015">Disulfide bond</keyword>
<keyword id="KW-0646">Protease inhibitor</keyword>
<keyword id="KW-0677">Repeat</keyword>
<keyword id="KW-0964">Secreted</keyword>
<keyword id="KW-0722">Serine protease inhibitor</keyword>
<keyword id="KW-0732">Signal</keyword>
<organism>
    <name type="scientific">Pinctada maxima</name>
    <name type="common">Silver-lipped pearl oyster</name>
    <name type="synonym">White-lipped pearl oyster</name>
    <dbReference type="NCBI Taxonomy" id="104660"/>
    <lineage>
        <taxon>Eukaryota</taxon>
        <taxon>Metazoa</taxon>
        <taxon>Spiralia</taxon>
        <taxon>Lophotrochozoa</taxon>
        <taxon>Mollusca</taxon>
        <taxon>Bivalvia</taxon>
        <taxon>Autobranchia</taxon>
        <taxon>Pteriomorphia</taxon>
        <taxon>Pterioida</taxon>
        <taxon>Pterioidea</taxon>
        <taxon>Pteriidae</taxon>
        <taxon>Pinctada</taxon>
    </lineage>
</organism>